<accession>Q8PK34</accession>
<organism>
    <name type="scientific">Xanthomonas axonopodis pv. citri (strain 306)</name>
    <dbReference type="NCBI Taxonomy" id="190486"/>
    <lineage>
        <taxon>Bacteria</taxon>
        <taxon>Pseudomonadati</taxon>
        <taxon>Pseudomonadota</taxon>
        <taxon>Gammaproteobacteria</taxon>
        <taxon>Lysobacterales</taxon>
        <taxon>Lysobacteraceae</taxon>
        <taxon>Xanthomonas</taxon>
    </lineage>
</organism>
<reference key="1">
    <citation type="journal article" date="2002" name="Nature">
        <title>Comparison of the genomes of two Xanthomonas pathogens with differing host specificities.</title>
        <authorList>
            <person name="da Silva A.C.R."/>
            <person name="Ferro J.A."/>
            <person name="Reinach F.C."/>
            <person name="Farah C.S."/>
            <person name="Furlan L.R."/>
            <person name="Quaggio R.B."/>
            <person name="Monteiro-Vitorello C.B."/>
            <person name="Van Sluys M.A."/>
            <person name="Almeida N.F. Jr."/>
            <person name="Alves L.M.C."/>
            <person name="do Amaral A.M."/>
            <person name="Bertolini M.C."/>
            <person name="Camargo L.E.A."/>
            <person name="Camarotte G."/>
            <person name="Cannavan F."/>
            <person name="Cardozo J."/>
            <person name="Chambergo F."/>
            <person name="Ciapina L.P."/>
            <person name="Cicarelli R.M.B."/>
            <person name="Coutinho L.L."/>
            <person name="Cursino-Santos J.R."/>
            <person name="El-Dorry H."/>
            <person name="Faria J.B."/>
            <person name="Ferreira A.J.S."/>
            <person name="Ferreira R.C.C."/>
            <person name="Ferro M.I.T."/>
            <person name="Formighieri E.F."/>
            <person name="Franco M.C."/>
            <person name="Greggio C.C."/>
            <person name="Gruber A."/>
            <person name="Katsuyama A.M."/>
            <person name="Kishi L.T."/>
            <person name="Leite R.P."/>
            <person name="Lemos E.G.M."/>
            <person name="Lemos M.V.F."/>
            <person name="Locali E.C."/>
            <person name="Machado M.A."/>
            <person name="Madeira A.M.B.N."/>
            <person name="Martinez-Rossi N.M."/>
            <person name="Martins E.C."/>
            <person name="Meidanis J."/>
            <person name="Menck C.F.M."/>
            <person name="Miyaki C.Y."/>
            <person name="Moon D.H."/>
            <person name="Moreira L.M."/>
            <person name="Novo M.T.M."/>
            <person name="Okura V.K."/>
            <person name="Oliveira M.C."/>
            <person name="Oliveira V.R."/>
            <person name="Pereira H.A."/>
            <person name="Rossi A."/>
            <person name="Sena J.A.D."/>
            <person name="Silva C."/>
            <person name="de Souza R.F."/>
            <person name="Spinola L.A.F."/>
            <person name="Takita M.A."/>
            <person name="Tamura R.E."/>
            <person name="Teixeira E.C."/>
            <person name="Tezza R.I.D."/>
            <person name="Trindade dos Santos M."/>
            <person name="Truffi D."/>
            <person name="Tsai S.M."/>
            <person name="White F.F."/>
            <person name="Setubal J.C."/>
            <person name="Kitajima J.P."/>
        </authorList>
    </citation>
    <scope>NUCLEOTIDE SEQUENCE [LARGE SCALE GENOMIC DNA]</scope>
    <source>
        <strain>306</strain>
    </source>
</reference>
<proteinExistence type="inferred from homology"/>
<evidence type="ECO:0000255" key="1">
    <source>
        <dbReference type="HAMAP-Rule" id="MF_00456"/>
    </source>
</evidence>
<feature type="chain" id="PRO_0000109757" description="Glutamate 5-kinase">
    <location>
        <begin position="1"/>
        <end position="363"/>
    </location>
</feature>
<feature type="domain" description="PUA" evidence="1">
    <location>
        <begin position="267"/>
        <end position="349"/>
    </location>
</feature>
<feature type="binding site" evidence="1">
    <location>
        <position position="3"/>
    </location>
    <ligand>
        <name>ATP</name>
        <dbReference type="ChEBI" id="CHEBI:30616"/>
    </ligand>
</feature>
<feature type="binding site" evidence="1">
    <location>
        <position position="43"/>
    </location>
    <ligand>
        <name>substrate</name>
    </ligand>
</feature>
<feature type="binding site" evidence="1">
    <location>
        <position position="128"/>
    </location>
    <ligand>
        <name>substrate</name>
    </ligand>
</feature>
<feature type="binding site" evidence="1">
    <location>
        <position position="140"/>
    </location>
    <ligand>
        <name>substrate</name>
    </ligand>
</feature>
<feature type="binding site" evidence="1">
    <location>
        <begin position="160"/>
        <end position="161"/>
    </location>
    <ligand>
        <name>ATP</name>
        <dbReference type="ChEBI" id="CHEBI:30616"/>
    </ligand>
</feature>
<feature type="binding site" evidence="1">
    <location>
        <begin position="202"/>
        <end position="208"/>
    </location>
    <ligand>
        <name>ATP</name>
        <dbReference type="ChEBI" id="CHEBI:30616"/>
    </ligand>
</feature>
<keyword id="KW-0028">Amino-acid biosynthesis</keyword>
<keyword id="KW-0067">ATP-binding</keyword>
<keyword id="KW-0963">Cytoplasm</keyword>
<keyword id="KW-0418">Kinase</keyword>
<keyword id="KW-0547">Nucleotide-binding</keyword>
<keyword id="KW-0641">Proline biosynthesis</keyword>
<keyword id="KW-0808">Transferase</keyword>
<sequence length="363" mass="38134">MLKVGSSLLAADGGGLSPRFALGLAQFVSANLAAGRELVIVSSGAVAAGRAILPKAMDVGAPIAARQALAALGQAQLIALWQRFFERPVAQVLLTHDDLRNRRRYLNARATLGELLRLGALPVINENDTVSVDELKLGDNDNLAAIVAALVDADALFIATDIDGLYSADPRSNPLARPLDDVPELTPEVLAMAGGSGSNVGTGGMRTKLEAAAKAGAAGIETYLFNGRSGEVVRALALDRLRGTRIHAARTRIAARKYWLRHAPVEAGAILIDDGAAAALTGKGASLLPGGVAGAQGDFRRGDMVEIRRRDTTGDGQCLARGVSQYSALDIRRIAGRHSREIENVLGYSYGENVVHRDDLVVL</sequence>
<dbReference type="EC" id="2.7.2.11" evidence="1"/>
<dbReference type="EMBL" id="AE008923">
    <property type="protein sequence ID" value="AAM37195.1"/>
    <property type="molecule type" value="Genomic_DNA"/>
</dbReference>
<dbReference type="SMR" id="Q8PK34"/>
<dbReference type="KEGG" id="xac:XAC2343"/>
<dbReference type="eggNOG" id="COG0263">
    <property type="taxonomic scope" value="Bacteria"/>
</dbReference>
<dbReference type="HOGENOM" id="CLU_025400_2_0_6"/>
<dbReference type="UniPathway" id="UPA00098">
    <property type="reaction ID" value="UER00359"/>
</dbReference>
<dbReference type="Proteomes" id="UP000000576">
    <property type="component" value="Chromosome"/>
</dbReference>
<dbReference type="GO" id="GO:0005829">
    <property type="term" value="C:cytosol"/>
    <property type="evidence" value="ECO:0007669"/>
    <property type="project" value="TreeGrafter"/>
</dbReference>
<dbReference type="GO" id="GO:0005524">
    <property type="term" value="F:ATP binding"/>
    <property type="evidence" value="ECO:0007669"/>
    <property type="project" value="UniProtKB-KW"/>
</dbReference>
<dbReference type="GO" id="GO:0004349">
    <property type="term" value="F:glutamate 5-kinase activity"/>
    <property type="evidence" value="ECO:0007669"/>
    <property type="project" value="UniProtKB-UniRule"/>
</dbReference>
<dbReference type="GO" id="GO:0003723">
    <property type="term" value="F:RNA binding"/>
    <property type="evidence" value="ECO:0007669"/>
    <property type="project" value="InterPro"/>
</dbReference>
<dbReference type="GO" id="GO:0055129">
    <property type="term" value="P:L-proline biosynthetic process"/>
    <property type="evidence" value="ECO:0007669"/>
    <property type="project" value="UniProtKB-UniRule"/>
</dbReference>
<dbReference type="CDD" id="cd04242">
    <property type="entry name" value="AAK_G5K_ProB"/>
    <property type="match status" value="1"/>
</dbReference>
<dbReference type="CDD" id="cd21157">
    <property type="entry name" value="PUA_G5K"/>
    <property type="match status" value="1"/>
</dbReference>
<dbReference type="FunFam" id="2.30.130.10:FF:000007">
    <property type="entry name" value="Glutamate 5-kinase"/>
    <property type="match status" value="1"/>
</dbReference>
<dbReference type="FunFam" id="3.40.1160.10:FF:000018">
    <property type="entry name" value="Glutamate 5-kinase"/>
    <property type="match status" value="1"/>
</dbReference>
<dbReference type="Gene3D" id="3.40.1160.10">
    <property type="entry name" value="Acetylglutamate kinase-like"/>
    <property type="match status" value="1"/>
</dbReference>
<dbReference type="Gene3D" id="2.30.130.10">
    <property type="entry name" value="PUA domain"/>
    <property type="match status" value="1"/>
</dbReference>
<dbReference type="HAMAP" id="MF_00456">
    <property type="entry name" value="ProB"/>
    <property type="match status" value="1"/>
</dbReference>
<dbReference type="InterPro" id="IPR036393">
    <property type="entry name" value="AceGlu_kinase-like_sf"/>
</dbReference>
<dbReference type="InterPro" id="IPR001048">
    <property type="entry name" value="Asp/Glu/Uridylate_kinase"/>
</dbReference>
<dbReference type="InterPro" id="IPR041739">
    <property type="entry name" value="G5K_ProB"/>
</dbReference>
<dbReference type="InterPro" id="IPR001057">
    <property type="entry name" value="Glu/AcGlu_kinase"/>
</dbReference>
<dbReference type="InterPro" id="IPR011529">
    <property type="entry name" value="Glu_5kinase"/>
</dbReference>
<dbReference type="InterPro" id="IPR005715">
    <property type="entry name" value="Glu_5kinase/COase_Synthase"/>
</dbReference>
<dbReference type="InterPro" id="IPR019797">
    <property type="entry name" value="Glutamate_5-kinase_CS"/>
</dbReference>
<dbReference type="InterPro" id="IPR002478">
    <property type="entry name" value="PUA"/>
</dbReference>
<dbReference type="InterPro" id="IPR015947">
    <property type="entry name" value="PUA-like_sf"/>
</dbReference>
<dbReference type="InterPro" id="IPR036974">
    <property type="entry name" value="PUA_sf"/>
</dbReference>
<dbReference type="NCBIfam" id="TIGR01027">
    <property type="entry name" value="proB"/>
    <property type="match status" value="1"/>
</dbReference>
<dbReference type="PANTHER" id="PTHR43654">
    <property type="entry name" value="GLUTAMATE 5-KINASE"/>
    <property type="match status" value="1"/>
</dbReference>
<dbReference type="PANTHER" id="PTHR43654:SF1">
    <property type="entry name" value="ISOPENTENYL PHOSPHATE KINASE"/>
    <property type="match status" value="1"/>
</dbReference>
<dbReference type="Pfam" id="PF00696">
    <property type="entry name" value="AA_kinase"/>
    <property type="match status" value="1"/>
</dbReference>
<dbReference type="Pfam" id="PF01472">
    <property type="entry name" value="PUA"/>
    <property type="match status" value="1"/>
</dbReference>
<dbReference type="PIRSF" id="PIRSF000729">
    <property type="entry name" value="GK"/>
    <property type="match status" value="1"/>
</dbReference>
<dbReference type="PRINTS" id="PR00474">
    <property type="entry name" value="GLU5KINASE"/>
</dbReference>
<dbReference type="SMART" id="SM00359">
    <property type="entry name" value="PUA"/>
    <property type="match status" value="1"/>
</dbReference>
<dbReference type="SUPFAM" id="SSF53633">
    <property type="entry name" value="Carbamate kinase-like"/>
    <property type="match status" value="1"/>
</dbReference>
<dbReference type="SUPFAM" id="SSF88697">
    <property type="entry name" value="PUA domain-like"/>
    <property type="match status" value="1"/>
</dbReference>
<dbReference type="PROSITE" id="PS00902">
    <property type="entry name" value="GLUTAMATE_5_KINASE"/>
    <property type="match status" value="1"/>
</dbReference>
<dbReference type="PROSITE" id="PS50890">
    <property type="entry name" value="PUA"/>
    <property type="match status" value="1"/>
</dbReference>
<comment type="function">
    <text evidence="1">Catalyzes the transfer of a phosphate group to glutamate to form L-glutamate 5-phosphate.</text>
</comment>
<comment type="catalytic activity">
    <reaction evidence="1">
        <text>L-glutamate + ATP = L-glutamyl 5-phosphate + ADP</text>
        <dbReference type="Rhea" id="RHEA:14877"/>
        <dbReference type="ChEBI" id="CHEBI:29985"/>
        <dbReference type="ChEBI" id="CHEBI:30616"/>
        <dbReference type="ChEBI" id="CHEBI:58274"/>
        <dbReference type="ChEBI" id="CHEBI:456216"/>
        <dbReference type="EC" id="2.7.2.11"/>
    </reaction>
</comment>
<comment type="pathway">
    <text evidence="1">Amino-acid biosynthesis; L-proline biosynthesis; L-glutamate 5-semialdehyde from L-glutamate: step 1/2.</text>
</comment>
<comment type="subcellular location">
    <subcellularLocation>
        <location evidence="1">Cytoplasm</location>
    </subcellularLocation>
</comment>
<comment type="similarity">
    <text evidence="1">Belongs to the glutamate 5-kinase family.</text>
</comment>
<protein>
    <recommendedName>
        <fullName evidence="1">Glutamate 5-kinase</fullName>
        <ecNumber evidence="1">2.7.2.11</ecNumber>
    </recommendedName>
    <alternativeName>
        <fullName evidence="1">Gamma-glutamyl kinase</fullName>
        <shortName evidence="1">GK</shortName>
    </alternativeName>
</protein>
<gene>
    <name evidence="1" type="primary">proB</name>
    <name type="ordered locus">XAC2343</name>
</gene>
<name>PROB_XANAC</name>